<accession>Q0JHU5</accession>
<accession>B7FA01</accession>
<accession>B9EUD1</accession>
<accession>O50005</accession>
<accession>O50006</accession>
<accession>Q7GC09</accession>
<accession>Q7Y0Z1</accession>
<accession>Q8LPB3</accession>
<reference key="1">
    <citation type="journal article" date="2002" name="Plant Cell Physiol.">
        <title>Rpp16 and Rpp17, from a common origin, have different protein characteristics but both genes are predominantly expressed in rice phloem tissues.</title>
        <authorList>
            <person name="Asano T."/>
            <person name="Kusano H."/>
            <person name="Okuda T."/>
            <person name="Kubo N."/>
            <person name="Shimada H."/>
            <person name="Kadowaki K."/>
        </authorList>
    </citation>
    <scope>NUCLEOTIDE SEQUENCE [GENOMIC DNA]</scope>
    <scope>ALTERNATIVE SPLICING</scope>
    <scope>TISSUE SPECIFICITY</scope>
    <source>
        <strain>cv. Nipponbare</strain>
    </source>
</reference>
<reference key="2">
    <citation type="journal article" date="2002" name="Nature">
        <title>The genome sequence and structure of rice chromosome 1.</title>
        <authorList>
            <person name="Sasaki T."/>
            <person name="Matsumoto T."/>
            <person name="Yamamoto K."/>
            <person name="Sakata K."/>
            <person name="Baba T."/>
            <person name="Katayose Y."/>
            <person name="Wu J."/>
            <person name="Niimura Y."/>
            <person name="Cheng Z."/>
            <person name="Nagamura Y."/>
            <person name="Antonio B.A."/>
            <person name="Kanamori H."/>
            <person name="Hosokawa S."/>
            <person name="Masukawa M."/>
            <person name="Arikawa K."/>
            <person name="Chiden Y."/>
            <person name="Hayashi M."/>
            <person name="Okamoto M."/>
            <person name="Ando T."/>
            <person name="Aoki H."/>
            <person name="Arita K."/>
            <person name="Hamada M."/>
            <person name="Harada C."/>
            <person name="Hijishita S."/>
            <person name="Honda M."/>
            <person name="Ichikawa Y."/>
            <person name="Idonuma A."/>
            <person name="Iijima M."/>
            <person name="Ikeda M."/>
            <person name="Ikeno M."/>
            <person name="Ito S."/>
            <person name="Ito T."/>
            <person name="Ito Y."/>
            <person name="Ito Y."/>
            <person name="Iwabuchi A."/>
            <person name="Kamiya K."/>
            <person name="Karasawa W."/>
            <person name="Katagiri S."/>
            <person name="Kikuta A."/>
            <person name="Kobayashi N."/>
            <person name="Kono I."/>
            <person name="Machita K."/>
            <person name="Maehara T."/>
            <person name="Mizuno H."/>
            <person name="Mizubayashi T."/>
            <person name="Mukai Y."/>
            <person name="Nagasaki H."/>
            <person name="Nakashima M."/>
            <person name="Nakama Y."/>
            <person name="Nakamichi Y."/>
            <person name="Nakamura M."/>
            <person name="Namiki N."/>
            <person name="Negishi M."/>
            <person name="Ohta I."/>
            <person name="Ono N."/>
            <person name="Saji S."/>
            <person name="Sakai K."/>
            <person name="Shibata M."/>
            <person name="Shimokawa T."/>
            <person name="Shomura A."/>
            <person name="Song J."/>
            <person name="Takazaki Y."/>
            <person name="Terasawa K."/>
            <person name="Tsuji K."/>
            <person name="Waki K."/>
            <person name="Yamagata H."/>
            <person name="Yamane H."/>
            <person name="Yoshiki S."/>
            <person name="Yoshihara R."/>
            <person name="Yukawa K."/>
            <person name="Zhong H."/>
            <person name="Iwama H."/>
            <person name="Endo T."/>
            <person name="Ito H."/>
            <person name="Hahn J.H."/>
            <person name="Kim H.-I."/>
            <person name="Eun M.-Y."/>
            <person name="Yano M."/>
            <person name="Jiang J."/>
            <person name="Gojobori T."/>
        </authorList>
    </citation>
    <scope>NUCLEOTIDE SEQUENCE [LARGE SCALE GENOMIC DNA]</scope>
    <source>
        <strain>cv. Nipponbare</strain>
    </source>
</reference>
<reference key="3">
    <citation type="journal article" date="2005" name="Nature">
        <title>The map-based sequence of the rice genome.</title>
        <authorList>
            <consortium name="International rice genome sequencing project (IRGSP)"/>
        </authorList>
    </citation>
    <scope>NUCLEOTIDE SEQUENCE [LARGE SCALE GENOMIC DNA]</scope>
    <source>
        <strain>cv. Nipponbare</strain>
    </source>
</reference>
<reference key="4">
    <citation type="journal article" date="2008" name="Nucleic Acids Res.">
        <title>The rice annotation project database (RAP-DB): 2008 update.</title>
        <authorList>
            <consortium name="The rice annotation project (RAP)"/>
        </authorList>
    </citation>
    <scope>GENOME REANNOTATION</scope>
    <source>
        <strain>cv. Nipponbare</strain>
    </source>
</reference>
<reference key="5">
    <citation type="journal article" date="2013" name="Rice">
        <title>Improvement of the Oryza sativa Nipponbare reference genome using next generation sequence and optical map data.</title>
        <authorList>
            <person name="Kawahara Y."/>
            <person name="de la Bastide M."/>
            <person name="Hamilton J.P."/>
            <person name="Kanamori H."/>
            <person name="McCombie W.R."/>
            <person name="Ouyang S."/>
            <person name="Schwartz D.C."/>
            <person name="Tanaka T."/>
            <person name="Wu J."/>
            <person name="Zhou S."/>
            <person name="Childs K.L."/>
            <person name="Davidson R.M."/>
            <person name="Lin H."/>
            <person name="Quesada-Ocampo L."/>
            <person name="Vaillancourt B."/>
            <person name="Sakai H."/>
            <person name="Lee S.S."/>
            <person name="Kim J."/>
            <person name="Numa H."/>
            <person name="Itoh T."/>
            <person name="Buell C.R."/>
            <person name="Matsumoto T."/>
        </authorList>
    </citation>
    <scope>GENOME REANNOTATION</scope>
    <source>
        <strain>cv. Nipponbare</strain>
    </source>
</reference>
<reference key="6">
    <citation type="journal article" date="2005" name="PLoS Biol.">
        <title>The genomes of Oryza sativa: a history of duplications.</title>
        <authorList>
            <person name="Yu J."/>
            <person name="Wang J."/>
            <person name="Lin W."/>
            <person name="Li S."/>
            <person name="Li H."/>
            <person name="Zhou J."/>
            <person name="Ni P."/>
            <person name="Dong W."/>
            <person name="Hu S."/>
            <person name="Zeng C."/>
            <person name="Zhang J."/>
            <person name="Zhang Y."/>
            <person name="Li R."/>
            <person name="Xu Z."/>
            <person name="Li S."/>
            <person name="Li X."/>
            <person name="Zheng H."/>
            <person name="Cong L."/>
            <person name="Lin L."/>
            <person name="Yin J."/>
            <person name="Geng J."/>
            <person name="Li G."/>
            <person name="Shi J."/>
            <person name="Liu J."/>
            <person name="Lv H."/>
            <person name="Li J."/>
            <person name="Wang J."/>
            <person name="Deng Y."/>
            <person name="Ran L."/>
            <person name="Shi X."/>
            <person name="Wang X."/>
            <person name="Wu Q."/>
            <person name="Li C."/>
            <person name="Ren X."/>
            <person name="Wang J."/>
            <person name="Wang X."/>
            <person name="Li D."/>
            <person name="Liu D."/>
            <person name="Zhang X."/>
            <person name="Ji Z."/>
            <person name="Zhao W."/>
            <person name="Sun Y."/>
            <person name="Zhang Z."/>
            <person name="Bao J."/>
            <person name="Han Y."/>
            <person name="Dong L."/>
            <person name="Ji J."/>
            <person name="Chen P."/>
            <person name="Wu S."/>
            <person name="Liu J."/>
            <person name="Xiao Y."/>
            <person name="Bu D."/>
            <person name="Tan J."/>
            <person name="Yang L."/>
            <person name="Ye C."/>
            <person name="Zhang J."/>
            <person name="Xu J."/>
            <person name="Zhou Y."/>
            <person name="Yu Y."/>
            <person name="Zhang B."/>
            <person name="Zhuang S."/>
            <person name="Wei H."/>
            <person name="Liu B."/>
            <person name="Lei M."/>
            <person name="Yu H."/>
            <person name="Li Y."/>
            <person name="Xu H."/>
            <person name="Wei S."/>
            <person name="He X."/>
            <person name="Fang L."/>
            <person name="Zhang Z."/>
            <person name="Zhang Y."/>
            <person name="Huang X."/>
            <person name="Su Z."/>
            <person name="Tong W."/>
            <person name="Li J."/>
            <person name="Tong Z."/>
            <person name="Li S."/>
            <person name="Ye J."/>
            <person name="Wang L."/>
            <person name="Fang L."/>
            <person name="Lei T."/>
            <person name="Chen C.-S."/>
            <person name="Chen H.-C."/>
            <person name="Xu Z."/>
            <person name="Li H."/>
            <person name="Huang H."/>
            <person name="Zhang F."/>
            <person name="Xu H."/>
            <person name="Li N."/>
            <person name="Zhao C."/>
            <person name="Li S."/>
            <person name="Dong L."/>
            <person name="Huang Y."/>
            <person name="Li L."/>
            <person name="Xi Y."/>
            <person name="Qi Q."/>
            <person name="Li W."/>
            <person name="Zhang B."/>
            <person name="Hu W."/>
            <person name="Zhang Y."/>
            <person name="Tian X."/>
            <person name="Jiao Y."/>
            <person name="Liang X."/>
            <person name="Jin J."/>
            <person name="Gao L."/>
            <person name="Zheng W."/>
            <person name="Hao B."/>
            <person name="Liu S.-M."/>
            <person name="Wang W."/>
            <person name="Yuan L."/>
            <person name="Cao M."/>
            <person name="McDermott J."/>
            <person name="Samudrala R."/>
            <person name="Wang J."/>
            <person name="Wong G.K.-S."/>
            <person name="Yang H."/>
        </authorList>
    </citation>
    <scope>NUCLEOTIDE SEQUENCE [LARGE SCALE GENOMIC DNA]</scope>
    <source>
        <strain>cv. Nipponbare</strain>
    </source>
</reference>
<reference key="7">
    <citation type="submission" date="2006-10" db="EMBL/GenBank/DDBJ databases">
        <title>Oryza sativa full length cDNA.</title>
        <authorList>
            <consortium name="The rice full-length cDNA consortium"/>
        </authorList>
    </citation>
    <scope>NUCLEOTIDE SEQUENCE [LARGE SCALE MRNA] (ISOFORM 2)</scope>
    <source>
        <strain>cv. Nipponbare</strain>
    </source>
</reference>
<reference key="8">
    <citation type="journal article" date="2003" name="Biochemistry">
        <title>Rice C2-domain proteins are induced and translocated to the plasma membrane in response to a fungal elicitor.</title>
        <authorList>
            <person name="Kim C.Y."/>
            <person name="Koo Y.D."/>
            <person name="Jin J.B."/>
            <person name="Moon B.C."/>
            <person name="Kang C.H."/>
            <person name="Kim S.T."/>
            <person name="Park B.O."/>
            <person name="Lee S.Y."/>
            <person name="Kim M.L."/>
            <person name="Hwang I."/>
            <person name="Kang K.Y."/>
            <person name="Bahk J.D."/>
            <person name="Lee S.Y."/>
            <person name="Cho M.J."/>
        </authorList>
    </citation>
    <scope>SUBCELLULAR LOCATION</scope>
    <scope>INDUCTION BY FUNGAL ELICITOR</scope>
</reference>
<reference key="9">
    <citation type="journal article" date="2013" name="Mol. Cells">
        <title>Rice small C2-domain proteins are phosphorylated by calcium-dependent protein kinase.</title>
        <authorList>
            <person name="Kang C.H."/>
            <person name="Moon B.C."/>
            <person name="Park H.C."/>
            <person name="Koo S.C."/>
            <person name="Chi Y.H."/>
            <person name="Cheong Y.H."/>
            <person name="Yoon B.D."/>
            <person name="Lee S.Y."/>
            <person name="Kim C.Y."/>
        </authorList>
    </citation>
    <scope>SUBCELLULAR LOCATION</scope>
    <scope>PHOSPHORYLATION AT SER-44</scope>
    <scope>MUTAGENESIS OF SER-44</scope>
</reference>
<keyword id="KW-0025">Alternative splicing</keyword>
<keyword id="KW-0106">Calcium</keyword>
<keyword id="KW-0111">Calcium/phospholipid-binding</keyword>
<keyword id="KW-1003">Cell membrane</keyword>
<keyword id="KW-0963">Cytoplasm</keyword>
<keyword id="KW-0472">Membrane</keyword>
<keyword id="KW-0479">Metal-binding</keyword>
<keyword id="KW-0597">Phosphoprotein</keyword>
<keyword id="KW-0611">Plant defense</keyword>
<keyword id="KW-1185">Reference proteome</keyword>
<organism>
    <name type="scientific">Oryza sativa subsp. japonica</name>
    <name type="common">Rice</name>
    <dbReference type="NCBI Taxonomy" id="39947"/>
    <lineage>
        <taxon>Eukaryota</taxon>
        <taxon>Viridiplantae</taxon>
        <taxon>Streptophyta</taxon>
        <taxon>Embryophyta</taxon>
        <taxon>Tracheophyta</taxon>
        <taxon>Spermatophyta</taxon>
        <taxon>Magnoliopsida</taxon>
        <taxon>Liliopsida</taxon>
        <taxon>Poales</taxon>
        <taxon>Poaceae</taxon>
        <taxon>BOP clade</taxon>
        <taxon>Oryzoideae</taxon>
        <taxon>Oryzeae</taxon>
        <taxon>Oryzinae</taxon>
        <taxon>Oryza</taxon>
        <taxon>Oryza sativa</taxon>
    </lineage>
</organism>
<comment type="function">
    <text evidence="3 7">May play a role in plant defense signaling (Probable). Isoform 2 binds to phospholipids in a Ca(2+)-dependent manner in response to pathogen elicitors (PubMed:14529272).</text>
</comment>
<comment type="cofactor">
    <cofactor evidence="1">
        <name>Ca(2+)</name>
        <dbReference type="ChEBI" id="CHEBI:29108"/>
    </cofactor>
    <text evidence="1">Binds 3 Ca(2+) ions per C2 domain.</text>
</comment>
<comment type="subcellular location">
    <subcellularLocation>
        <location evidence="3">Cytoplasm</location>
    </subcellularLocation>
    <subcellularLocation>
        <location evidence="3 4">Cell membrane</location>
    </subcellularLocation>
    <text evidence="3 4">Translocates to plasma membrane upon fungal elicitor or calcium treatment.</text>
</comment>
<comment type="alternative products">
    <event type="alternative splicing"/>
    <isoform>
        <id>Q0JHU5-1</id>
        <id>Q7GC09-1</id>
        <name>1</name>
        <name>ERG1a</name>
        <name>Rpp17-1</name>
        <name>FIERG1</name>
        <sequence type="displayed"/>
    </isoform>
    <isoform>
        <id>Q0JHU5-2</id>
        <id>Q7GC09-2</id>
        <name>2</name>
        <name>ERG1b</name>
        <name>Rpp17-2</name>
        <name>FIERG2</name>
        <sequence type="described" ref="VSP_015389"/>
    </isoform>
</comment>
<comment type="tissue specificity">
    <text evidence="2">Isoform 2 is expressed in young vascular tissues and tiller buds.</text>
</comment>
<comment type="induction">
    <text evidence="3">By fungal elicitor and calcium.</text>
</comment>
<comment type="PTM">
    <text evidence="4">Phosphorylated at Ser-44 by CPK18 in a calcium-dependent manner.</text>
</comment>
<protein>
    <recommendedName>
        <fullName>Elicitor-responsive protein 1</fullName>
        <shortName evidence="5">OsERG1</shortName>
    </recommendedName>
    <alternativeName>
        <fullName>17 kDa phloem protein</fullName>
    </alternativeName>
    <alternativeName>
        <fullName>Fungal elicitor immediate early-responsive gene 1 protein</fullName>
        <shortName>FIERG1</shortName>
    </alternativeName>
    <alternativeName>
        <fullName>RPP17</fullName>
    </alternativeName>
</protein>
<dbReference type="EMBL" id="AB060730">
    <property type="protein sequence ID" value="BAC06445.1"/>
    <property type="molecule type" value="Genomic_DNA"/>
</dbReference>
<dbReference type="EMBL" id="AB060730">
    <property type="protein sequence ID" value="BAC06446.1"/>
    <property type="molecule type" value="Genomic_DNA"/>
</dbReference>
<dbReference type="EMBL" id="AP003240">
    <property type="status" value="NOT_ANNOTATED_CDS"/>
    <property type="molecule type" value="Genomic_DNA"/>
</dbReference>
<dbReference type="EMBL" id="AP008207">
    <property type="protein sequence ID" value="BAF06683.1"/>
    <property type="molecule type" value="Genomic_DNA"/>
</dbReference>
<dbReference type="EMBL" id="AP014957">
    <property type="protein sequence ID" value="BAS75163.1"/>
    <property type="molecule type" value="Genomic_DNA"/>
</dbReference>
<dbReference type="EMBL" id="CM000138">
    <property type="protein sequence ID" value="EEE55652.1"/>
    <property type="molecule type" value="Genomic_DNA"/>
</dbReference>
<dbReference type="EMBL" id="AK243099">
    <property type="protein sequence ID" value="BAH01449.1"/>
    <property type="molecule type" value="mRNA"/>
</dbReference>
<dbReference type="RefSeq" id="XP_015616516.1">
    <property type="nucleotide sequence ID" value="XM_015761030.1"/>
</dbReference>
<dbReference type="SMR" id="Q0JHU5"/>
<dbReference type="FunCoup" id="Q0JHU5">
    <property type="interactions" value="128"/>
</dbReference>
<dbReference type="STRING" id="39947.Q0JHU5"/>
<dbReference type="iPTMnet" id="Q0JHU5"/>
<dbReference type="PaxDb" id="39947-Q0JHU5"/>
<dbReference type="EnsemblPlants" id="Os01t0841700-02">
    <molecule id="Q0JHU5-1"/>
    <property type="protein sequence ID" value="Os01t0841700-02"/>
    <property type="gene ID" value="Os01g0841700"/>
</dbReference>
<dbReference type="Gramene" id="Os01t0841700-02">
    <molecule id="Q0JHU5-1"/>
    <property type="protein sequence ID" value="Os01t0841700-02"/>
    <property type="gene ID" value="Os01g0841700"/>
</dbReference>
<dbReference type="KEGG" id="dosa:Os01g0841700"/>
<dbReference type="eggNOG" id="KOG1030">
    <property type="taxonomic scope" value="Eukaryota"/>
</dbReference>
<dbReference type="InParanoid" id="Q0JHU5"/>
<dbReference type="OMA" id="GWRYSSF"/>
<dbReference type="OrthoDB" id="419768at2759"/>
<dbReference type="Proteomes" id="UP000000763">
    <property type="component" value="Chromosome 1"/>
</dbReference>
<dbReference type="Proteomes" id="UP000007752">
    <property type="component" value="Chromosome 1"/>
</dbReference>
<dbReference type="Proteomes" id="UP000059680">
    <property type="component" value="Chromosome 1"/>
</dbReference>
<dbReference type="GO" id="GO:0005737">
    <property type="term" value="C:cytoplasm"/>
    <property type="evidence" value="ECO:0007669"/>
    <property type="project" value="UniProtKB-SubCell"/>
</dbReference>
<dbReference type="GO" id="GO:0005886">
    <property type="term" value="C:plasma membrane"/>
    <property type="evidence" value="ECO:0007669"/>
    <property type="project" value="UniProtKB-SubCell"/>
</dbReference>
<dbReference type="GO" id="GO:0005544">
    <property type="term" value="F:calcium-dependent phospholipid binding"/>
    <property type="evidence" value="ECO:0007669"/>
    <property type="project" value="UniProtKB-KW"/>
</dbReference>
<dbReference type="GO" id="GO:0046872">
    <property type="term" value="F:metal ion binding"/>
    <property type="evidence" value="ECO:0007669"/>
    <property type="project" value="UniProtKB-KW"/>
</dbReference>
<dbReference type="GO" id="GO:0006952">
    <property type="term" value="P:defense response"/>
    <property type="evidence" value="ECO:0007669"/>
    <property type="project" value="UniProtKB-KW"/>
</dbReference>
<dbReference type="CDD" id="cd04049">
    <property type="entry name" value="C2_putative_Elicitor-responsive_gene"/>
    <property type="match status" value="1"/>
</dbReference>
<dbReference type="Gene3D" id="2.60.40.150">
    <property type="entry name" value="C2 domain"/>
    <property type="match status" value="1"/>
</dbReference>
<dbReference type="InterPro" id="IPR000008">
    <property type="entry name" value="C2_dom"/>
</dbReference>
<dbReference type="InterPro" id="IPR035892">
    <property type="entry name" value="C2_domain_sf"/>
</dbReference>
<dbReference type="PANTHER" id="PTHR46502:SF15">
    <property type="entry name" value="16 KDA PHLOEM PROTEIN 1"/>
    <property type="match status" value="1"/>
</dbReference>
<dbReference type="PANTHER" id="PTHR46502">
    <property type="entry name" value="C2 DOMAIN-CONTAINING"/>
    <property type="match status" value="1"/>
</dbReference>
<dbReference type="Pfam" id="PF00168">
    <property type="entry name" value="C2"/>
    <property type="match status" value="1"/>
</dbReference>
<dbReference type="SMART" id="SM00239">
    <property type="entry name" value="C2"/>
    <property type="match status" value="1"/>
</dbReference>
<dbReference type="SUPFAM" id="SSF49562">
    <property type="entry name" value="C2 domain (Calcium/lipid-binding domain, CaLB)"/>
    <property type="match status" value="1"/>
</dbReference>
<dbReference type="PROSITE" id="PS50004">
    <property type="entry name" value="C2"/>
    <property type="match status" value="1"/>
</dbReference>
<feature type="chain" id="PRO_0000087016" description="Elicitor-responsive protein 1">
    <location>
        <begin position="1"/>
        <end position="159"/>
    </location>
</feature>
<feature type="domain" description="C2" evidence="1">
    <location>
        <begin position="1"/>
        <end position="112"/>
    </location>
</feature>
<feature type="binding site" evidence="1">
    <location>
        <position position="21"/>
    </location>
    <ligand>
        <name>Ca(2+)</name>
        <dbReference type="ChEBI" id="CHEBI:29108"/>
        <label>1</label>
    </ligand>
</feature>
<feature type="binding site" evidence="1">
    <location>
        <position position="21"/>
    </location>
    <ligand>
        <name>Ca(2+)</name>
        <dbReference type="ChEBI" id="CHEBI:29108"/>
        <label>2</label>
    </ligand>
</feature>
<feature type="binding site" evidence="1">
    <location>
        <position position="30"/>
    </location>
    <ligand>
        <name>Ca(2+)</name>
        <dbReference type="ChEBI" id="CHEBI:29108"/>
        <label>1</label>
    </ligand>
</feature>
<feature type="binding site" evidence="1">
    <location>
        <position position="81"/>
    </location>
    <ligand>
        <name>Ca(2+)</name>
        <dbReference type="ChEBI" id="CHEBI:29108"/>
        <label>1</label>
    </ligand>
</feature>
<feature type="binding site" evidence="1">
    <location>
        <position position="81"/>
    </location>
    <ligand>
        <name>Ca(2+)</name>
        <dbReference type="ChEBI" id="CHEBI:29108"/>
        <label>2</label>
    </ligand>
</feature>
<feature type="binding site" evidence="1">
    <location>
        <position position="83"/>
    </location>
    <ligand>
        <name>Ca(2+)</name>
        <dbReference type="ChEBI" id="CHEBI:29108"/>
        <label>1</label>
    </ligand>
</feature>
<feature type="binding site" evidence="1">
    <location>
        <position position="83"/>
    </location>
    <ligand>
        <name>Ca(2+)</name>
        <dbReference type="ChEBI" id="CHEBI:29108"/>
        <label>2</label>
    </ligand>
</feature>
<feature type="binding site" evidence="1">
    <location>
        <position position="83"/>
    </location>
    <ligand>
        <name>Ca(2+)</name>
        <dbReference type="ChEBI" id="CHEBI:29108"/>
        <label>3</label>
    </ligand>
</feature>
<feature type="binding site" evidence="1">
    <location>
        <position position="86"/>
    </location>
    <ligand>
        <name>Ca(2+)</name>
        <dbReference type="ChEBI" id="CHEBI:29108"/>
        <label>3</label>
    </ligand>
</feature>
<feature type="binding site" evidence="1">
    <location>
        <position position="89"/>
    </location>
    <ligand>
        <name>Ca(2+)</name>
        <dbReference type="ChEBI" id="CHEBI:29108"/>
        <label>2</label>
    </ligand>
</feature>
<feature type="binding site" evidence="1">
    <location>
        <position position="89"/>
    </location>
    <ligand>
        <name>Ca(2+)</name>
        <dbReference type="ChEBI" id="CHEBI:29108"/>
        <label>3</label>
    </ligand>
</feature>
<feature type="modified residue" description="Phosphoserine; by CPK" evidence="4">
    <location>
        <position position="44"/>
    </location>
</feature>
<feature type="splice variant" id="VSP_015389" description="In isoform 2." evidence="6">
    <location>
        <begin position="24"/>
        <end position="26"/>
    </location>
</feature>
<feature type="mutagenesis site" description="Abolishes phosphorylation, binding to phospholipids and localization to plasma membrane." evidence="4">
    <original>S</original>
    <variation>A</variation>
    <location>
        <position position="44"/>
    </location>
</feature>
<feature type="mutagenesis site" description="Abolishes phosphorylation and binding to phospholipids." evidence="4">
    <original>S</original>
    <variation>D</variation>
    <location>
        <position position="44"/>
    </location>
</feature>
<gene>
    <name type="primary">ERG1</name>
    <name type="ordered locus">Os01g0841700</name>
    <name type="ordered locus">LOC_Os01g62430</name>
    <name evidence="8" type="ORF">OsJ_04036</name>
    <name type="ORF">P0406G08</name>
</gene>
<proteinExistence type="evidence at protein level"/>
<evidence type="ECO:0000255" key="1">
    <source>
        <dbReference type="PROSITE-ProRule" id="PRU00041"/>
    </source>
</evidence>
<evidence type="ECO:0000269" key="2">
    <source>
    </source>
</evidence>
<evidence type="ECO:0000269" key="3">
    <source>
    </source>
</evidence>
<evidence type="ECO:0000269" key="4">
    <source>
    </source>
</evidence>
<evidence type="ECO:0000303" key="5">
    <source>
    </source>
</evidence>
<evidence type="ECO:0000305" key="6"/>
<evidence type="ECO:0000305" key="7">
    <source>
    </source>
</evidence>
<evidence type="ECO:0000312" key="8">
    <source>
        <dbReference type="EMBL" id="EEE55652.1"/>
    </source>
</evidence>
<name>ERG1_ORYSJ</name>
<sequence>MAGSGVLEVHLVDAKGLTGNDFLGEIGKIDPYVVVQYRSQERKSSVARDQGKNPSWNEVFKFQINSTAATGQHKLFLRLMDHDTFSRDDFLGEATINVTDLISLGMEHGTWEMSESKHRVVLADKTYHGEIRVSLTFTASAKAQDHAEQVGGWAHSFRQ</sequence>